<reference key="1">
    <citation type="journal article" date="1997" name="Microbiology">
        <title>Sequencing and functional annotation of the Bacillus subtilis genes in the 200 kb rrnB-dnaB region.</title>
        <authorList>
            <person name="Lapidus A."/>
            <person name="Galleron N."/>
            <person name="Sorokin A."/>
            <person name="Ehrlich S.D."/>
        </authorList>
    </citation>
    <scope>NUCLEOTIDE SEQUENCE [GENOMIC DNA]</scope>
    <source>
        <strain>168</strain>
    </source>
</reference>
<reference key="2">
    <citation type="journal article" date="1997" name="Nature">
        <title>The complete genome sequence of the Gram-positive bacterium Bacillus subtilis.</title>
        <authorList>
            <person name="Kunst F."/>
            <person name="Ogasawara N."/>
            <person name="Moszer I."/>
            <person name="Albertini A.M."/>
            <person name="Alloni G."/>
            <person name="Azevedo V."/>
            <person name="Bertero M.G."/>
            <person name="Bessieres P."/>
            <person name="Bolotin A."/>
            <person name="Borchert S."/>
            <person name="Borriss R."/>
            <person name="Boursier L."/>
            <person name="Brans A."/>
            <person name="Braun M."/>
            <person name="Brignell S.C."/>
            <person name="Bron S."/>
            <person name="Brouillet S."/>
            <person name="Bruschi C.V."/>
            <person name="Caldwell B."/>
            <person name="Capuano V."/>
            <person name="Carter N.M."/>
            <person name="Choi S.-K."/>
            <person name="Codani J.-J."/>
            <person name="Connerton I.F."/>
            <person name="Cummings N.J."/>
            <person name="Daniel R.A."/>
            <person name="Denizot F."/>
            <person name="Devine K.M."/>
            <person name="Duesterhoeft A."/>
            <person name="Ehrlich S.D."/>
            <person name="Emmerson P.T."/>
            <person name="Entian K.-D."/>
            <person name="Errington J."/>
            <person name="Fabret C."/>
            <person name="Ferrari E."/>
            <person name="Foulger D."/>
            <person name="Fritz C."/>
            <person name="Fujita M."/>
            <person name="Fujita Y."/>
            <person name="Fuma S."/>
            <person name="Galizzi A."/>
            <person name="Galleron N."/>
            <person name="Ghim S.-Y."/>
            <person name="Glaser P."/>
            <person name="Goffeau A."/>
            <person name="Golightly E.J."/>
            <person name="Grandi G."/>
            <person name="Guiseppi G."/>
            <person name="Guy B.J."/>
            <person name="Haga K."/>
            <person name="Haiech J."/>
            <person name="Harwood C.R."/>
            <person name="Henaut A."/>
            <person name="Hilbert H."/>
            <person name="Holsappel S."/>
            <person name="Hosono S."/>
            <person name="Hullo M.-F."/>
            <person name="Itaya M."/>
            <person name="Jones L.-M."/>
            <person name="Joris B."/>
            <person name="Karamata D."/>
            <person name="Kasahara Y."/>
            <person name="Klaerr-Blanchard M."/>
            <person name="Klein C."/>
            <person name="Kobayashi Y."/>
            <person name="Koetter P."/>
            <person name="Koningstein G."/>
            <person name="Krogh S."/>
            <person name="Kumano M."/>
            <person name="Kurita K."/>
            <person name="Lapidus A."/>
            <person name="Lardinois S."/>
            <person name="Lauber J."/>
            <person name="Lazarevic V."/>
            <person name="Lee S.-M."/>
            <person name="Levine A."/>
            <person name="Liu H."/>
            <person name="Masuda S."/>
            <person name="Mauel C."/>
            <person name="Medigue C."/>
            <person name="Medina N."/>
            <person name="Mellado R.P."/>
            <person name="Mizuno M."/>
            <person name="Moestl D."/>
            <person name="Nakai S."/>
            <person name="Noback M."/>
            <person name="Noone D."/>
            <person name="O'Reilly M."/>
            <person name="Ogawa K."/>
            <person name="Ogiwara A."/>
            <person name="Oudega B."/>
            <person name="Park S.-H."/>
            <person name="Parro V."/>
            <person name="Pohl T.M."/>
            <person name="Portetelle D."/>
            <person name="Porwollik S."/>
            <person name="Prescott A.M."/>
            <person name="Presecan E."/>
            <person name="Pujic P."/>
            <person name="Purnelle B."/>
            <person name="Rapoport G."/>
            <person name="Rey M."/>
            <person name="Reynolds S."/>
            <person name="Rieger M."/>
            <person name="Rivolta C."/>
            <person name="Rocha E."/>
            <person name="Roche B."/>
            <person name="Rose M."/>
            <person name="Sadaie Y."/>
            <person name="Sato T."/>
            <person name="Scanlan E."/>
            <person name="Schleich S."/>
            <person name="Schroeter R."/>
            <person name="Scoffone F."/>
            <person name="Sekiguchi J."/>
            <person name="Sekowska A."/>
            <person name="Seror S.J."/>
            <person name="Serror P."/>
            <person name="Shin B.-S."/>
            <person name="Soldo B."/>
            <person name="Sorokin A."/>
            <person name="Tacconi E."/>
            <person name="Takagi T."/>
            <person name="Takahashi H."/>
            <person name="Takemaru K."/>
            <person name="Takeuchi M."/>
            <person name="Tamakoshi A."/>
            <person name="Tanaka T."/>
            <person name="Terpstra P."/>
            <person name="Tognoni A."/>
            <person name="Tosato V."/>
            <person name="Uchiyama S."/>
            <person name="Vandenbol M."/>
            <person name="Vannier F."/>
            <person name="Vassarotti A."/>
            <person name="Viari A."/>
            <person name="Wambutt R."/>
            <person name="Wedler E."/>
            <person name="Wedler H."/>
            <person name="Weitzenegger T."/>
            <person name="Winters P."/>
            <person name="Wipat A."/>
            <person name="Yamamoto H."/>
            <person name="Yamane K."/>
            <person name="Yasumoto K."/>
            <person name="Yata K."/>
            <person name="Yoshida K."/>
            <person name="Yoshikawa H.-F."/>
            <person name="Zumstein E."/>
            <person name="Yoshikawa H."/>
            <person name="Danchin A."/>
        </authorList>
    </citation>
    <scope>NUCLEOTIDE SEQUENCE [LARGE SCALE GENOMIC DNA]</scope>
    <source>
        <strain>168</strain>
    </source>
</reference>
<reference key="3">
    <citation type="journal article" date="2019" name="J. Bacteriol.">
        <title>The melREDCA operon encodes a utilization system for the raffinose family of oligosaccharides in Bacillus subtilis.</title>
        <authorList>
            <person name="Morabbi Heravi K."/>
            <person name="Watzlawick H."/>
            <person name="Altenbuchner J."/>
        </authorList>
    </citation>
    <scope>FUNCTION</scope>
    <scope>SUBUNIT</scope>
    <scope>SUBCELLULAR LOCATION</scope>
    <scope>INDUCTION</scope>
    <scope>DISRUPTION PHENOTYPE</scope>
    <source>
        <strain>168 / KM0</strain>
    </source>
</reference>
<reference evidence="6" key="4">
    <citation type="submission" date="2014-08" db="PDB data bank">
        <title>Crystal structure of transporter MsmE from Bacillus subtilis, target Efi-510764.</title>
        <authorList>
            <person name="Patskovsky Y."/>
            <person name="Toro R."/>
            <person name="Bhosle R."/>
            <person name="Al obaidi N."/>
            <person name="Chamala S."/>
            <person name="Scott glenn A."/>
            <person name="Attonito J.D."/>
            <person name="Chowdhury S."/>
            <person name="Lafleur J."/>
            <person name="Siedel R.D."/>
            <person name="Hillerich B."/>
            <person name="Love J."/>
            <person name="Whalen K.L."/>
            <person name="Gerlt J.A."/>
            <person name="Almo S.C."/>
        </authorList>
    </citation>
    <scope>X-RAY CRYSTALLOGRAPHY (1.50 ANGSTROMS) OF 22-426</scope>
</reference>
<sequence>MKHTFVLFLSLILLVLPGCSAEKSSADTAKKTLTIYSTMSTDSERDTFRKLAAAFEKEHSDIHVSLHFPGNDYENMMRVRMAANDLPDLFDTHGWGKIRYGEYTADLRDMKWTQDLDPNLNSILKNKSGKVYAYPINQAKDGLAYNRNILDRYGIAPPETMDDFIKALRTIKEKSKGSIVPFWFAGYDKSSFAQYYDQFATPLLITDPAHNEKKQLINGTFQWSKFTYLSEILKQMQKEKLINIDAVTAKKSQLIELMAQNKIAFTMQGGTLGQDVAQINPNVKVGIIPTPAIHPGDDPIWIGGERYTLAAWKDSPQLKEAKDFIAFMARPANAKQMAEATSLPSGLTNVKADIFYANDYEYYQDVKVEPYFDRLYLPNGMWDVLGTVGQELAADILAPQDISQKLGREYKRLREQSETQGAENNE</sequence>
<accession>O34335</accession>
<accession>Q795Q9</accession>
<proteinExistence type="evidence at protein level"/>
<name>MELE_BACSU</name>
<evidence type="ECO:0000255" key="1"/>
<evidence type="ECO:0000269" key="2">
    <source>
    </source>
</evidence>
<evidence type="ECO:0000303" key="3">
    <source>
    </source>
</evidence>
<evidence type="ECO:0000305" key="4"/>
<evidence type="ECO:0000305" key="5">
    <source>
    </source>
</evidence>
<evidence type="ECO:0007744" key="6">
    <source>
        <dbReference type="PDB" id="4R6H"/>
    </source>
</evidence>
<evidence type="ECO:0007829" key="7">
    <source>
        <dbReference type="PDB" id="4R6H"/>
    </source>
</evidence>
<gene>
    <name evidence="3" type="primary">melE</name>
    <name type="synonym">msmE</name>
    <name type="ordered locus">BSU30270</name>
</gene>
<organism>
    <name type="scientific">Bacillus subtilis (strain 168)</name>
    <dbReference type="NCBI Taxonomy" id="224308"/>
    <lineage>
        <taxon>Bacteria</taxon>
        <taxon>Bacillati</taxon>
        <taxon>Bacillota</taxon>
        <taxon>Bacilli</taxon>
        <taxon>Bacillales</taxon>
        <taxon>Bacillaceae</taxon>
        <taxon>Bacillus</taxon>
    </lineage>
</organism>
<protein>
    <recommendedName>
        <fullName evidence="4">Melibiose/raffinose/stachyose-binding protein MelE</fullName>
    </recommendedName>
</protein>
<comment type="function">
    <text evidence="2">Part of the ABC transporter complex MelEDC-MsmX involved in melibiose, raffinose and stachyose import. Binds melibiose, raffinose and stachyose.</text>
</comment>
<comment type="subunit">
    <text evidence="2">The complex is composed of two ATP-binding proteins (MsmX), two transmembrane proteins (MelC and MelD) and a solute-binding protein (MelE).</text>
</comment>
<comment type="subcellular location">
    <subcellularLocation>
        <location evidence="5">Cell membrane</location>
        <topology evidence="4">Lipid-anchor</topology>
    </subcellularLocation>
</comment>
<comment type="induction">
    <text evidence="2">Repressed by the transcriptional regulator MelR. Induced by melibiose and raffinose.</text>
</comment>
<comment type="disruption phenotype">
    <text evidence="2">Deletion of the gene abolishes induction in the presence of melibiose and raffinose.</text>
</comment>
<comment type="similarity">
    <text evidence="4">Belongs to the bacterial solute-binding protein 1 family.</text>
</comment>
<dbReference type="EMBL" id="AF008220">
    <property type="protein sequence ID" value="AAC00386.1"/>
    <property type="molecule type" value="Genomic_DNA"/>
</dbReference>
<dbReference type="EMBL" id="AL009126">
    <property type="protein sequence ID" value="CAB15005.1"/>
    <property type="molecule type" value="Genomic_DNA"/>
</dbReference>
<dbReference type="PIR" id="H69660">
    <property type="entry name" value="H69660"/>
</dbReference>
<dbReference type="RefSeq" id="NP_390905.1">
    <property type="nucleotide sequence ID" value="NC_000964.3"/>
</dbReference>
<dbReference type="RefSeq" id="WP_004398680.1">
    <property type="nucleotide sequence ID" value="NZ_OZ025638.1"/>
</dbReference>
<dbReference type="PDB" id="4R6H">
    <property type="method" value="X-ray"/>
    <property type="resolution" value="1.50 A"/>
    <property type="chains" value="A=22-426"/>
</dbReference>
<dbReference type="PDBsum" id="4R6H"/>
<dbReference type="SMR" id="O34335"/>
<dbReference type="FunCoup" id="O34335">
    <property type="interactions" value="130"/>
</dbReference>
<dbReference type="STRING" id="224308.BSU30270"/>
<dbReference type="PaxDb" id="224308-BSU30270"/>
<dbReference type="DNASU" id="936693"/>
<dbReference type="EnsemblBacteria" id="CAB15005">
    <property type="protein sequence ID" value="CAB15005"/>
    <property type="gene ID" value="BSU_30270"/>
</dbReference>
<dbReference type="GeneID" id="936693"/>
<dbReference type="KEGG" id="bsu:BSU30270"/>
<dbReference type="PATRIC" id="fig|224308.179.peg.3283"/>
<dbReference type="eggNOG" id="COG1653">
    <property type="taxonomic scope" value="Bacteria"/>
</dbReference>
<dbReference type="InParanoid" id="O34335"/>
<dbReference type="OrthoDB" id="9798191at2"/>
<dbReference type="PhylomeDB" id="O34335"/>
<dbReference type="BioCyc" id="BSUB:BSU30270-MONOMER"/>
<dbReference type="EvolutionaryTrace" id="O34335"/>
<dbReference type="Proteomes" id="UP000001570">
    <property type="component" value="Chromosome"/>
</dbReference>
<dbReference type="GO" id="GO:0005886">
    <property type="term" value="C:plasma membrane"/>
    <property type="evidence" value="ECO:0007669"/>
    <property type="project" value="UniProtKB-SubCell"/>
</dbReference>
<dbReference type="GO" id="GO:0015774">
    <property type="term" value="P:polysaccharide transport"/>
    <property type="evidence" value="ECO:0007669"/>
    <property type="project" value="UniProtKB-KW"/>
</dbReference>
<dbReference type="Gene3D" id="3.40.190.10">
    <property type="entry name" value="Periplasmic binding protein-like II"/>
    <property type="match status" value="2"/>
</dbReference>
<dbReference type="InterPro" id="IPR050490">
    <property type="entry name" value="Bact_solute-bd_prot1"/>
</dbReference>
<dbReference type="InterPro" id="IPR006059">
    <property type="entry name" value="SBP"/>
</dbReference>
<dbReference type="PANTHER" id="PTHR43649">
    <property type="entry name" value="ARABINOSE-BINDING PROTEIN-RELATED"/>
    <property type="match status" value="1"/>
</dbReference>
<dbReference type="PANTHER" id="PTHR43649:SF33">
    <property type="entry name" value="POLYGALACTURONAN_RHAMNOGALACTURONAN-BINDING PROTEIN YTCQ"/>
    <property type="match status" value="1"/>
</dbReference>
<dbReference type="Pfam" id="PF01547">
    <property type="entry name" value="SBP_bac_1"/>
    <property type="match status" value="1"/>
</dbReference>
<dbReference type="SUPFAM" id="SSF53850">
    <property type="entry name" value="Periplasmic binding protein-like II"/>
    <property type="match status" value="1"/>
</dbReference>
<feature type="signal peptide" evidence="1">
    <location>
        <begin position="1"/>
        <end position="18"/>
    </location>
</feature>
<feature type="chain" id="PRO_0000387963" description="Melibiose/raffinose/stachyose-binding protein MelE">
    <location>
        <begin position="19"/>
        <end position="426"/>
    </location>
</feature>
<feature type="lipid moiety-binding region" description="N-palmitoyl cysteine" evidence="1">
    <location>
        <position position="19"/>
    </location>
</feature>
<feature type="lipid moiety-binding region" description="S-diacylglycerol cysteine" evidence="1">
    <location>
        <position position="19"/>
    </location>
</feature>
<feature type="strand" evidence="7">
    <location>
        <begin position="30"/>
        <end position="36"/>
    </location>
</feature>
<feature type="helix" evidence="7">
    <location>
        <begin position="42"/>
        <end position="58"/>
    </location>
</feature>
<feature type="strand" evidence="7">
    <location>
        <begin position="62"/>
        <end position="67"/>
    </location>
</feature>
<feature type="helix" evidence="7">
    <location>
        <begin position="70"/>
        <end position="72"/>
    </location>
</feature>
<feature type="helix" evidence="7">
    <location>
        <begin position="73"/>
        <end position="82"/>
    </location>
</feature>
<feature type="strand" evidence="7">
    <location>
        <begin position="88"/>
        <end position="90"/>
    </location>
</feature>
<feature type="helix" evidence="7">
    <location>
        <begin position="96"/>
        <end position="100"/>
    </location>
</feature>
<feature type="turn" evidence="7">
    <location>
        <begin position="101"/>
        <end position="103"/>
    </location>
</feature>
<feature type="helix" evidence="7">
    <location>
        <begin position="111"/>
        <end position="115"/>
    </location>
</feature>
<feature type="helix" evidence="7">
    <location>
        <begin position="118"/>
        <end position="120"/>
    </location>
</feature>
<feature type="helix" evidence="7">
    <location>
        <begin position="121"/>
        <end position="124"/>
    </location>
</feature>
<feature type="strand" evidence="7">
    <location>
        <begin position="134"/>
        <end position="136"/>
    </location>
</feature>
<feature type="strand" evidence="7">
    <location>
        <begin position="139"/>
        <end position="146"/>
    </location>
</feature>
<feature type="helix" evidence="7">
    <location>
        <begin position="147"/>
        <end position="153"/>
    </location>
</feature>
<feature type="helix" evidence="7">
    <location>
        <begin position="161"/>
        <end position="175"/>
    </location>
</feature>
<feature type="strand" evidence="7">
    <location>
        <begin position="178"/>
        <end position="183"/>
    </location>
</feature>
<feature type="helix" evidence="7">
    <location>
        <begin position="190"/>
        <end position="204"/>
    </location>
</feature>
<feature type="helix" evidence="7">
    <location>
        <begin position="208"/>
        <end position="210"/>
    </location>
</feature>
<feature type="helix" evidence="7">
    <location>
        <begin position="213"/>
        <end position="217"/>
    </location>
</feature>
<feature type="helix" evidence="7">
    <location>
        <begin position="223"/>
        <end position="226"/>
    </location>
</feature>
<feature type="helix" evidence="7">
    <location>
        <begin position="227"/>
        <end position="238"/>
    </location>
</feature>
<feature type="helix" evidence="7">
    <location>
        <begin position="246"/>
        <end position="248"/>
    </location>
</feature>
<feature type="helix" evidence="7">
    <location>
        <begin position="251"/>
        <end position="253"/>
    </location>
</feature>
<feature type="helix" evidence="7">
    <location>
        <begin position="254"/>
        <end position="259"/>
    </location>
</feature>
<feature type="strand" evidence="7">
    <location>
        <begin position="263"/>
        <end position="267"/>
    </location>
</feature>
<feature type="helix" evidence="7">
    <location>
        <begin position="272"/>
        <end position="279"/>
    </location>
</feature>
<feature type="strand" evidence="7">
    <location>
        <begin position="285"/>
        <end position="290"/>
    </location>
</feature>
<feature type="strand" evidence="7">
    <location>
        <begin position="300"/>
        <end position="304"/>
    </location>
</feature>
<feature type="strand" evidence="7">
    <location>
        <begin position="307"/>
        <end position="312"/>
    </location>
</feature>
<feature type="helix" evidence="7">
    <location>
        <begin position="318"/>
        <end position="329"/>
    </location>
</feature>
<feature type="helix" evidence="7">
    <location>
        <begin position="331"/>
        <end position="340"/>
    </location>
</feature>
<feature type="helix" evidence="7">
    <location>
        <begin position="357"/>
        <end position="362"/>
    </location>
</feature>
<feature type="turn" evidence="7">
    <location>
        <begin position="363"/>
        <end position="365"/>
    </location>
</feature>
<feature type="strand" evidence="7">
    <location>
        <begin position="368"/>
        <end position="370"/>
    </location>
</feature>
<feature type="helix" evidence="7">
    <location>
        <begin position="372"/>
        <end position="376"/>
    </location>
</feature>
<feature type="helix" evidence="7">
    <location>
        <begin position="381"/>
        <end position="393"/>
    </location>
</feature>
<feature type="helix" evidence="7">
    <location>
        <begin position="399"/>
        <end position="418"/>
    </location>
</feature>
<keyword id="KW-0002">3D-structure</keyword>
<keyword id="KW-1003">Cell membrane</keyword>
<keyword id="KW-0449">Lipoprotein</keyword>
<keyword id="KW-0472">Membrane</keyword>
<keyword id="KW-0564">Palmitate</keyword>
<keyword id="KW-0625">Polysaccharide transport</keyword>
<keyword id="KW-1185">Reference proteome</keyword>
<keyword id="KW-0732">Signal</keyword>
<keyword id="KW-0762">Sugar transport</keyword>
<keyword id="KW-0813">Transport</keyword>